<organism>
    <name type="scientific">Xanthomonas axonopodis pv. citri (strain 306)</name>
    <dbReference type="NCBI Taxonomy" id="190486"/>
    <lineage>
        <taxon>Bacteria</taxon>
        <taxon>Pseudomonadati</taxon>
        <taxon>Pseudomonadota</taxon>
        <taxon>Gammaproteobacteria</taxon>
        <taxon>Lysobacterales</taxon>
        <taxon>Lysobacteraceae</taxon>
        <taxon>Xanthomonas</taxon>
    </lineage>
</organism>
<keyword id="KW-0028">Amino-acid biosynthesis</keyword>
<keyword id="KW-0057">Aromatic amino acid biosynthesis</keyword>
<keyword id="KW-0210">Decarboxylase</keyword>
<keyword id="KW-0456">Lyase</keyword>
<keyword id="KW-0822">Tryptophan biosynthesis</keyword>
<protein>
    <recommendedName>
        <fullName evidence="1">Indole-3-glycerol phosphate synthase</fullName>
        <shortName evidence="1">IGPS</shortName>
        <ecNumber evidence="1">4.1.1.48</ecNumber>
    </recommendedName>
</protein>
<name>TRPC_XANAC</name>
<feature type="chain" id="PRO_0000154267" description="Indole-3-glycerol phosphate synthase">
    <location>
        <begin position="1"/>
        <end position="265"/>
    </location>
</feature>
<reference key="1">
    <citation type="journal article" date="2002" name="Nature">
        <title>Comparison of the genomes of two Xanthomonas pathogens with differing host specificities.</title>
        <authorList>
            <person name="da Silva A.C.R."/>
            <person name="Ferro J.A."/>
            <person name="Reinach F.C."/>
            <person name="Farah C.S."/>
            <person name="Furlan L.R."/>
            <person name="Quaggio R.B."/>
            <person name="Monteiro-Vitorello C.B."/>
            <person name="Van Sluys M.A."/>
            <person name="Almeida N.F. Jr."/>
            <person name="Alves L.M.C."/>
            <person name="do Amaral A.M."/>
            <person name="Bertolini M.C."/>
            <person name="Camargo L.E.A."/>
            <person name="Camarotte G."/>
            <person name="Cannavan F."/>
            <person name="Cardozo J."/>
            <person name="Chambergo F."/>
            <person name="Ciapina L.P."/>
            <person name="Cicarelli R.M.B."/>
            <person name="Coutinho L.L."/>
            <person name="Cursino-Santos J.R."/>
            <person name="El-Dorry H."/>
            <person name="Faria J.B."/>
            <person name="Ferreira A.J.S."/>
            <person name="Ferreira R.C.C."/>
            <person name="Ferro M.I.T."/>
            <person name="Formighieri E.F."/>
            <person name="Franco M.C."/>
            <person name="Greggio C.C."/>
            <person name="Gruber A."/>
            <person name="Katsuyama A.M."/>
            <person name="Kishi L.T."/>
            <person name="Leite R.P."/>
            <person name="Lemos E.G.M."/>
            <person name="Lemos M.V.F."/>
            <person name="Locali E.C."/>
            <person name="Machado M.A."/>
            <person name="Madeira A.M.B.N."/>
            <person name="Martinez-Rossi N.M."/>
            <person name="Martins E.C."/>
            <person name="Meidanis J."/>
            <person name="Menck C.F.M."/>
            <person name="Miyaki C.Y."/>
            <person name="Moon D.H."/>
            <person name="Moreira L.M."/>
            <person name="Novo M.T.M."/>
            <person name="Okura V.K."/>
            <person name="Oliveira M.C."/>
            <person name="Oliveira V.R."/>
            <person name="Pereira H.A."/>
            <person name="Rossi A."/>
            <person name="Sena J.A.D."/>
            <person name="Silva C."/>
            <person name="de Souza R.F."/>
            <person name="Spinola L.A.F."/>
            <person name="Takita M.A."/>
            <person name="Tamura R.E."/>
            <person name="Teixeira E.C."/>
            <person name="Tezza R.I.D."/>
            <person name="Trindade dos Santos M."/>
            <person name="Truffi D."/>
            <person name="Tsai S.M."/>
            <person name="White F.F."/>
            <person name="Setubal J.C."/>
            <person name="Kitajima J.P."/>
        </authorList>
    </citation>
    <scope>NUCLEOTIDE SEQUENCE [LARGE SCALE GENOMIC DNA]</scope>
    <source>
        <strain>306</strain>
    </source>
</reference>
<sequence>MSDILNTILARKADEVAERSARVPLAELIARSADLPLTRGFAAAMQASIAAGDPAVIAEVKKASPSKGVIRPDFQPADIAVSYEFGGATCLSVLTDVDFFQGSDAYLRQARDACTLPVLRKDFTVDPYQVYEARVLGADCILLIVSALEDAQLADLSGLAMQLGLDVLVEVHDIDELERAVQVPVPLIGINNRNLRTFEVTLQTTLDMRSAVPRDRVLVTESGIVTQADVQRMRSHDVNAFLVGETFMRAAEPGESLRQLFFAHD</sequence>
<dbReference type="EC" id="4.1.1.48" evidence="1"/>
<dbReference type="EMBL" id="AE008923">
    <property type="protein sequence ID" value="AAM35372.1"/>
    <property type="molecule type" value="Genomic_DNA"/>
</dbReference>
<dbReference type="SMR" id="Q8PQ47"/>
<dbReference type="KEGG" id="xac:XAC0481"/>
<dbReference type="eggNOG" id="COG0134">
    <property type="taxonomic scope" value="Bacteria"/>
</dbReference>
<dbReference type="HOGENOM" id="CLU_034247_2_0_6"/>
<dbReference type="UniPathway" id="UPA00035">
    <property type="reaction ID" value="UER00043"/>
</dbReference>
<dbReference type="Proteomes" id="UP000000576">
    <property type="component" value="Chromosome"/>
</dbReference>
<dbReference type="GO" id="GO:0004425">
    <property type="term" value="F:indole-3-glycerol-phosphate synthase activity"/>
    <property type="evidence" value="ECO:0007669"/>
    <property type="project" value="UniProtKB-UniRule"/>
</dbReference>
<dbReference type="GO" id="GO:0004640">
    <property type="term" value="F:phosphoribosylanthranilate isomerase activity"/>
    <property type="evidence" value="ECO:0007669"/>
    <property type="project" value="TreeGrafter"/>
</dbReference>
<dbReference type="GO" id="GO:0000162">
    <property type="term" value="P:L-tryptophan biosynthetic process"/>
    <property type="evidence" value="ECO:0007669"/>
    <property type="project" value="UniProtKB-UniRule"/>
</dbReference>
<dbReference type="CDD" id="cd00331">
    <property type="entry name" value="IGPS"/>
    <property type="match status" value="1"/>
</dbReference>
<dbReference type="FunFam" id="3.20.20.70:FF:000024">
    <property type="entry name" value="Indole-3-glycerol phosphate synthase"/>
    <property type="match status" value="1"/>
</dbReference>
<dbReference type="Gene3D" id="3.20.20.70">
    <property type="entry name" value="Aldolase class I"/>
    <property type="match status" value="1"/>
</dbReference>
<dbReference type="HAMAP" id="MF_00134_B">
    <property type="entry name" value="IGPS_B"/>
    <property type="match status" value="1"/>
</dbReference>
<dbReference type="InterPro" id="IPR013785">
    <property type="entry name" value="Aldolase_TIM"/>
</dbReference>
<dbReference type="InterPro" id="IPR045186">
    <property type="entry name" value="Indole-3-glycerol_P_synth"/>
</dbReference>
<dbReference type="InterPro" id="IPR013798">
    <property type="entry name" value="Indole-3-glycerol_P_synth_dom"/>
</dbReference>
<dbReference type="InterPro" id="IPR001468">
    <property type="entry name" value="Indole-3-GlycerolPSynthase_CS"/>
</dbReference>
<dbReference type="InterPro" id="IPR011060">
    <property type="entry name" value="RibuloseP-bd_barrel"/>
</dbReference>
<dbReference type="NCBIfam" id="NF001370">
    <property type="entry name" value="PRK00278.1-2"/>
    <property type="match status" value="1"/>
</dbReference>
<dbReference type="NCBIfam" id="NF001373">
    <property type="entry name" value="PRK00278.1-6"/>
    <property type="match status" value="1"/>
</dbReference>
<dbReference type="NCBIfam" id="NF001377">
    <property type="entry name" value="PRK00278.2-4"/>
    <property type="match status" value="1"/>
</dbReference>
<dbReference type="PANTHER" id="PTHR22854:SF2">
    <property type="entry name" value="INDOLE-3-GLYCEROL-PHOSPHATE SYNTHASE"/>
    <property type="match status" value="1"/>
</dbReference>
<dbReference type="PANTHER" id="PTHR22854">
    <property type="entry name" value="TRYPTOPHAN BIOSYNTHESIS PROTEIN"/>
    <property type="match status" value="1"/>
</dbReference>
<dbReference type="Pfam" id="PF00218">
    <property type="entry name" value="IGPS"/>
    <property type="match status" value="1"/>
</dbReference>
<dbReference type="SUPFAM" id="SSF51366">
    <property type="entry name" value="Ribulose-phoshate binding barrel"/>
    <property type="match status" value="1"/>
</dbReference>
<dbReference type="PROSITE" id="PS00614">
    <property type="entry name" value="IGPS"/>
    <property type="match status" value="1"/>
</dbReference>
<evidence type="ECO:0000255" key="1">
    <source>
        <dbReference type="HAMAP-Rule" id="MF_00134"/>
    </source>
</evidence>
<comment type="catalytic activity">
    <reaction evidence="1">
        <text>1-(2-carboxyphenylamino)-1-deoxy-D-ribulose 5-phosphate + H(+) = (1S,2R)-1-C-(indol-3-yl)glycerol 3-phosphate + CO2 + H2O</text>
        <dbReference type="Rhea" id="RHEA:23476"/>
        <dbReference type="ChEBI" id="CHEBI:15377"/>
        <dbReference type="ChEBI" id="CHEBI:15378"/>
        <dbReference type="ChEBI" id="CHEBI:16526"/>
        <dbReference type="ChEBI" id="CHEBI:58613"/>
        <dbReference type="ChEBI" id="CHEBI:58866"/>
        <dbReference type="EC" id="4.1.1.48"/>
    </reaction>
</comment>
<comment type="pathway">
    <text evidence="1">Amino-acid biosynthesis; L-tryptophan biosynthesis; L-tryptophan from chorismate: step 4/5.</text>
</comment>
<comment type="similarity">
    <text evidence="1">Belongs to the TrpC family.</text>
</comment>
<proteinExistence type="inferred from homology"/>
<gene>
    <name evidence="1" type="primary">trpC</name>
    <name type="ordered locus">XAC0481</name>
</gene>
<accession>Q8PQ47</accession>